<accession>A7ZCV1</accession>
<dbReference type="EMBL" id="CP000792">
    <property type="protein sequence ID" value="EAT98067.1"/>
    <property type="molecule type" value="Genomic_DNA"/>
</dbReference>
<dbReference type="RefSeq" id="WP_009293641.1">
    <property type="nucleotide sequence ID" value="NC_009802.2"/>
</dbReference>
<dbReference type="SMR" id="A7ZCV1"/>
<dbReference type="STRING" id="360104.CCC13826_0668"/>
<dbReference type="KEGG" id="cco:CCC13826_0668"/>
<dbReference type="eggNOG" id="COG0234">
    <property type="taxonomic scope" value="Bacteria"/>
</dbReference>
<dbReference type="HOGENOM" id="CLU_132825_2_0_7"/>
<dbReference type="OrthoDB" id="9806791at2"/>
<dbReference type="Proteomes" id="UP000001121">
    <property type="component" value="Chromosome"/>
</dbReference>
<dbReference type="GO" id="GO:0005737">
    <property type="term" value="C:cytoplasm"/>
    <property type="evidence" value="ECO:0007669"/>
    <property type="project" value="UniProtKB-SubCell"/>
</dbReference>
<dbReference type="GO" id="GO:0005524">
    <property type="term" value="F:ATP binding"/>
    <property type="evidence" value="ECO:0007669"/>
    <property type="project" value="InterPro"/>
</dbReference>
<dbReference type="GO" id="GO:0046872">
    <property type="term" value="F:metal ion binding"/>
    <property type="evidence" value="ECO:0007669"/>
    <property type="project" value="TreeGrafter"/>
</dbReference>
<dbReference type="GO" id="GO:0044183">
    <property type="term" value="F:protein folding chaperone"/>
    <property type="evidence" value="ECO:0007669"/>
    <property type="project" value="InterPro"/>
</dbReference>
<dbReference type="GO" id="GO:0051087">
    <property type="term" value="F:protein-folding chaperone binding"/>
    <property type="evidence" value="ECO:0007669"/>
    <property type="project" value="TreeGrafter"/>
</dbReference>
<dbReference type="GO" id="GO:0051082">
    <property type="term" value="F:unfolded protein binding"/>
    <property type="evidence" value="ECO:0007669"/>
    <property type="project" value="TreeGrafter"/>
</dbReference>
<dbReference type="GO" id="GO:0051085">
    <property type="term" value="P:chaperone cofactor-dependent protein refolding"/>
    <property type="evidence" value="ECO:0007669"/>
    <property type="project" value="TreeGrafter"/>
</dbReference>
<dbReference type="CDD" id="cd00320">
    <property type="entry name" value="cpn10"/>
    <property type="match status" value="1"/>
</dbReference>
<dbReference type="FunFam" id="2.30.33.40:FF:000001">
    <property type="entry name" value="10 kDa chaperonin"/>
    <property type="match status" value="1"/>
</dbReference>
<dbReference type="Gene3D" id="2.30.33.40">
    <property type="entry name" value="GroES chaperonin"/>
    <property type="match status" value="1"/>
</dbReference>
<dbReference type="HAMAP" id="MF_00580">
    <property type="entry name" value="CH10"/>
    <property type="match status" value="1"/>
</dbReference>
<dbReference type="InterPro" id="IPR020818">
    <property type="entry name" value="Chaperonin_GroES"/>
</dbReference>
<dbReference type="InterPro" id="IPR037124">
    <property type="entry name" value="Chaperonin_GroES_sf"/>
</dbReference>
<dbReference type="InterPro" id="IPR011032">
    <property type="entry name" value="GroES-like_sf"/>
</dbReference>
<dbReference type="NCBIfam" id="NF001537">
    <property type="entry name" value="PRK00364.3-3"/>
    <property type="match status" value="1"/>
</dbReference>
<dbReference type="PANTHER" id="PTHR10772">
    <property type="entry name" value="10 KDA HEAT SHOCK PROTEIN"/>
    <property type="match status" value="1"/>
</dbReference>
<dbReference type="PANTHER" id="PTHR10772:SF58">
    <property type="entry name" value="CO-CHAPERONIN GROES"/>
    <property type="match status" value="1"/>
</dbReference>
<dbReference type="Pfam" id="PF00166">
    <property type="entry name" value="Cpn10"/>
    <property type="match status" value="1"/>
</dbReference>
<dbReference type="PRINTS" id="PR00297">
    <property type="entry name" value="CHAPERONIN10"/>
</dbReference>
<dbReference type="SMART" id="SM00883">
    <property type="entry name" value="Cpn10"/>
    <property type="match status" value="1"/>
</dbReference>
<dbReference type="SUPFAM" id="SSF50129">
    <property type="entry name" value="GroES-like"/>
    <property type="match status" value="1"/>
</dbReference>
<protein>
    <recommendedName>
        <fullName evidence="1">Co-chaperonin GroES</fullName>
    </recommendedName>
    <alternativeName>
        <fullName evidence="1">10 kDa chaperonin</fullName>
    </alternativeName>
    <alternativeName>
        <fullName evidence="1">Chaperonin-10</fullName>
        <shortName evidence="1">Cpn10</shortName>
    </alternativeName>
</protein>
<name>CH10_CAMC1</name>
<comment type="function">
    <text evidence="1">Together with the chaperonin GroEL, plays an essential role in assisting protein folding. The GroEL-GroES system forms a nano-cage that allows encapsulation of the non-native substrate proteins and provides a physical environment optimized to promote and accelerate protein folding. GroES binds to the apical surface of the GroEL ring, thereby capping the opening of the GroEL channel.</text>
</comment>
<comment type="subunit">
    <text evidence="1">Heptamer of 7 subunits arranged in a ring. Interacts with the chaperonin GroEL.</text>
</comment>
<comment type="subcellular location">
    <subcellularLocation>
        <location evidence="1">Cytoplasm</location>
    </subcellularLocation>
</comment>
<comment type="similarity">
    <text evidence="1">Belongs to the GroES chaperonin family.</text>
</comment>
<evidence type="ECO:0000255" key="1">
    <source>
        <dbReference type="HAMAP-Rule" id="MF_00580"/>
    </source>
</evidence>
<reference key="1">
    <citation type="submission" date="2007-10" db="EMBL/GenBank/DDBJ databases">
        <title>Genome sequence of Campylobacter concisus 13826 isolated from human feces.</title>
        <authorList>
            <person name="Fouts D.E."/>
            <person name="Mongodin E.F."/>
            <person name="Puiu D."/>
            <person name="Sebastian Y."/>
            <person name="Miller W.G."/>
            <person name="Mandrell R.E."/>
            <person name="On S."/>
            <person name="Nelson K.E."/>
        </authorList>
    </citation>
    <scope>NUCLEOTIDE SEQUENCE [LARGE SCALE GENOMIC DNA]</scope>
    <source>
        <strain>13826</strain>
    </source>
</reference>
<keyword id="KW-0143">Chaperone</keyword>
<keyword id="KW-0963">Cytoplasm</keyword>
<proteinExistence type="inferred from homology"/>
<sequence length="86" mass="9272">MNFQPLGKRVLVERVEETKTTASGIIIPDNAKEKPLSGEVKAVGAEAEGVKVGEKVVFAKYAGTEVNLDDKTYLVLNIDDILGVIK</sequence>
<organism>
    <name type="scientific">Campylobacter concisus (strain 13826)</name>
    <dbReference type="NCBI Taxonomy" id="360104"/>
    <lineage>
        <taxon>Bacteria</taxon>
        <taxon>Pseudomonadati</taxon>
        <taxon>Campylobacterota</taxon>
        <taxon>Epsilonproteobacteria</taxon>
        <taxon>Campylobacterales</taxon>
        <taxon>Campylobacteraceae</taxon>
        <taxon>Campylobacter</taxon>
    </lineage>
</organism>
<gene>
    <name evidence="1" type="primary">groES</name>
    <name evidence="1" type="synonym">groS</name>
    <name type="ordered locus">Ccon26_07320</name>
    <name type="ORF">CCC13826_0668</name>
</gene>
<feature type="chain" id="PRO_1000025226" description="Co-chaperonin GroES">
    <location>
        <begin position="1"/>
        <end position="86"/>
    </location>
</feature>